<keyword id="KW-0963">Cytoplasm</keyword>
<keyword id="KW-0227">DNA damage</keyword>
<keyword id="KW-0234">DNA repair</keyword>
<keyword id="KW-0378">Hydrolase</keyword>
<keyword id="KW-0346">Stress response</keyword>
<organism>
    <name type="scientific">Pseudomonas aeruginosa (strain LESB58)</name>
    <dbReference type="NCBI Taxonomy" id="557722"/>
    <lineage>
        <taxon>Bacteria</taxon>
        <taxon>Pseudomonadati</taxon>
        <taxon>Pseudomonadota</taxon>
        <taxon>Gammaproteobacteria</taxon>
        <taxon>Pseudomonadales</taxon>
        <taxon>Pseudomonadaceae</taxon>
        <taxon>Pseudomonas</taxon>
    </lineage>
</organism>
<reference key="1">
    <citation type="journal article" date="2009" name="Genome Res.">
        <title>Newly introduced genomic prophage islands are critical determinants of in vivo competitiveness in the Liverpool epidemic strain of Pseudomonas aeruginosa.</title>
        <authorList>
            <person name="Winstanley C."/>
            <person name="Langille M.G.I."/>
            <person name="Fothergill J.L."/>
            <person name="Kukavica-Ibrulj I."/>
            <person name="Paradis-Bleau C."/>
            <person name="Sanschagrin F."/>
            <person name="Thomson N.R."/>
            <person name="Winsor G.L."/>
            <person name="Quail M.A."/>
            <person name="Lennard N."/>
            <person name="Bignell A."/>
            <person name="Clarke L."/>
            <person name="Seeger K."/>
            <person name="Saunders D."/>
            <person name="Harris D."/>
            <person name="Parkhill J."/>
            <person name="Hancock R.E.W."/>
            <person name="Brinkman F.S.L."/>
            <person name="Levesque R.C."/>
        </authorList>
    </citation>
    <scope>NUCLEOTIDE SEQUENCE [LARGE SCALE GENOMIC DNA]</scope>
    <source>
        <strain>LESB58</strain>
    </source>
</reference>
<dbReference type="EC" id="3.1.2.-" evidence="1"/>
<dbReference type="EC" id="3.5.1.-" evidence="1"/>
<dbReference type="EC" id="3.5.1.124" evidence="1"/>
<dbReference type="EMBL" id="FM209186">
    <property type="protein sequence ID" value="CAW28939.1"/>
    <property type="molecule type" value="Genomic_DNA"/>
</dbReference>
<dbReference type="RefSeq" id="WP_003109098.1">
    <property type="nucleotide sequence ID" value="NC_011770.1"/>
</dbReference>
<dbReference type="SMR" id="B7UX51"/>
<dbReference type="KEGG" id="pag:PLES_41841"/>
<dbReference type="HOGENOM" id="CLU_066933_0_0_6"/>
<dbReference type="GO" id="GO:0005737">
    <property type="term" value="C:cytoplasm"/>
    <property type="evidence" value="ECO:0007669"/>
    <property type="project" value="UniProtKB-SubCell"/>
</dbReference>
<dbReference type="GO" id="GO:0019172">
    <property type="term" value="F:glyoxalase III activity"/>
    <property type="evidence" value="ECO:0007669"/>
    <property type="project" value="TreeGrafter"/>
</dbReference>
<dbReference type="GO" id="GO:0036524">
    <property type="term" value="F:protein deglycase activity"/>
    <property type="evidence" value="ECO:0007669"/>
    <property type="project" value="UniProtKB-UniRule"/>
</dbReference>
<dbReference type="GO" id="GO:0016790">
    <property type="term" value="F:thiolester hydrolase activity"/>
    <property type="evidence" value="ECO:0007669"/>
    <property type="project" value="UniProtKB-UniRule"/>
</dbReference>
<dbReference type="GO" id="GO:0006281">
    <property type="term" value="P:DNA repair"/>
    <property type="evidence" value="ECO:0007669"/>
    <property type="project" value="UniProtKB-UniRule"/>
</dbReference>
<dbReference type="GO" id="GO:0019243">
    <property type="term" value="P:methylglyoxal catabolic process to D-lactate via S-lactoyl-glutathione"/>
    <property type="evidence" value="ECO:0007669"/>
    <property type="project" value="TreeGrafter"/>
</dbReference>
<dbReference type="GO" id="GO:0030091">
    <property type="term" value="P:protein repair"/>
    <property type="evidence" value="ECO:0007669"/>
    <property type="project" value="UniProtKB-UniRule"/>
</dbReference>
<dbReference type="Gene3D" id="3.40.50.880">
    <property type="match status" value="1"/>
</dbReference>
<dbReference type="HAMAP" id="MF_01046">
    <property type="entry name" value="Deglycase_HchA"/>
    <property type="match status" value="1"/>
</dbReference>
<dbReference type="InterPro" id="IPR029062">
    <property type="entry name" value="Class_I_gatase-like"/>
</dbReference>
<dbReference type="InterPro" id="IPR002818">
    <property type="entry name" value="DJ-1/PfpI"/>
</dbReference>
<dbReference type="InterPro" id="IPR017283">
    <property type="entry name" value="HchA"/>
</dbReference>
<dbReference type="InterPro" id="IPR050325">
    <property type="entry name" value="Prot/Nucl_acid_deglycase"/>
</dbReference>
<dbReference type="NCBIfam" id="NF003168">
    <property type="entry name" value="PRK04155.1"/>
    <property type="match status" value="1"/>
</dbReference>
<dbReference type="PANTHER" id="PTHR48094">
    <property type="entry name" value="PROTEIN/NUCLEIC ACID DEGLYCASE DJ-1-RELATED"/>
    <property type="match status" value="1"/>
</dbReference>
<dbReference type="PANTHER" id="PTHR48094:SF20">
    <property type="entry name" value="PROTEIN_NUCLEIC ACID DEGLYCASE 1"/>
    <property type="match status" value="1"/>
</dbReference>
<dbReference type="Pfam" id="PF01965">
    <property type="entry name" value="DJ-1_PfpI"/>
    <property type="match status" value="1"/>
</dbReference>
<dbReference type="PIRSF" id="PIRSF037798">
    <property type="entry name" value="Chaperone_HchA"/>
    <property type="match status" value="1"/>
</dbReference>
<dbReference type="SUPFAM" id="SSF52317">
    <property type="entry name" value="Class I glutamine amidotransferase-like"/>
    <property type="match status" value="1"/>
</dbReference>
<feature type="chain" id="PRO_1000136182" description="Protein/nucleic acid deglycase HchA">
    <location>
        <begin position="1"/>
        <end position="291"/>
    </location>
</feature>
<feature type="region of interest" description="Disordered" evidence="2">
    <location>
        <begin position="1"/>
        <end position="20"/>
    </location>
</feature>
<feature type="compositionally biased region" description="Basic and acidic residues" evidence="2">
    <location>
        <begin position="1"/>
        <end position="18"/>
    </location>
</feature>
<feature type="active site" description="Nucleophile" evidence="1">
    <location>
        <position position="188"/>
    </location>
</feature>
<protein>
    <recommendedName>
        <fullName evidence="1">Protein/nucleic acid deglycase HchA</fullName>
        <ecNumber evidence="1">3.1.2.-</ecNumber>
        <ecNumber evidence="1">3.5.1.-</ecNumber>
        <ecNumber evidence="1">3.5.1.124</ecNumber>
    </recommendedName>
    <alternativeName>
        <fullName evidence="1">Maillard deglycase</fullName>
    </alternativeName>
</protein>
<gene>
    <name evidence="1" type="primary">hchA</name>
    <name type="ordered locus">PLES_41841</name>
</gene>
<name>HCHA_PSEA8</name>
<comment type="function">
    <text evidence="1">Protein and nucleotide deglycase that catalyzes the deglycation of the Maillard adducts formed between amino groups of proteins or nucleotides and reactive carbonyl groups of glyoxals. Thus, functions as a protein deglycase that repairs methylglyoxal- and glyoxal-glycated proteins, and releases repaired proteins and lactate or glycolate, respectively. Deglycates cysteine, arginine and lysine residues in proteins, and thus reactivates these proteins by reversing glycation by glyoxals. Acts on early glycation intermediates (hemithioacetals and aminocarbinols), preventing the formation of Schiff bases and advanced glycation endproducts (AGE). Also functions as a nucleotide deglycase able to repair glycated guanine in the free nucleotide pool (GTP, GDP, GMP, dGTP) and in DNA and RNA. Is thus involved in a major nucleotide repair system named guanine glycation repair (GG repair), dedicated to reversing methylglyoxal and glyoxal damage via nucleotide sanitization and direct nucleic acid repair. Plays an important role in protecting cells from carbonyl stress.</text>
</comment>
<comment type="catalytic activity">
    <reaction evidence="1">
        <text>N(omega)-(1-hydroxy-2-oxopropyl)-L-arginyl-[protein] + H2O = lactate + L-arginyl-[protein] + H(+)</text>
        <dbReference type="Rhea" id="RHEA:49548"/>
        <dbReference type="Rhea" id="RHEA-COMP:10532"/>
        <dbReference type="Rhea" id="RHEA-COMP:12428"/>
        <dbReference type="ChEBI" id="CHEBI:15377"/>
        <dbReference type="ChEBI" id="CHEBI:15378"/>
        <dbReference type="ChEBI" id="CHEBI:24996"/>
        <dbReference type="ChEBI" id="CHEBI:29965"/>
        <dbReference type="ChEBI" id="CHEBI:131708"/>
        <dbReference type="EC" id="3.5.1.124"/>
    </reaction>
</comment>
<comment type="catalytic activity">
    <reaction evidence="1">
        <text>N(6)-(1-hydroxy-2-oxopropyl)-L-lysyl-[protein] + H2O = lactate + L-lysyl-[protein] + H(+)</text>
        <dbReference type="Rhea" id="RHEA:49552"/>
        <dbReference type="Rhea" id="RHEA-COMP:9752"/>
        <dbReference type="Rhea" id="RHEA-COMP:12429"/>
        <dbReference type="ChEBI" id="CHEBI:15377"/>
        <dbReference type="ChEBI" id="CHEBI:15378"/>
        <dbReference type="ChEBI" id="CHEBI:24996"/>
        <dbReference type="ChEBI" id="CHEBI:29969"/>
        <dbReference type="ChEBI" id="CHEBI:131709"/>
        <dbReference type="EC" id="3.5.1.124"/>
    </reaction>
</comment>
<comment type="catalytic activity">
    <reaction evidence="1">
        <text>S-(1-hydroxy-2-oxopropyl)-L-cysteinyl-[protein] + H2O = lactate + L-cysteinyl-[protein] + H(+)</text>
        <dbReference type="Rhea" id="RHEA:49556"/>
        <dbReference type="Rhea" id="RHEA-COMP:10131"/>
        <dbReference type="Rhea" id="RHEA-COMP:12430"/>
        <dbReference type="ChEBI" id="CHEBI:15377"/>
        <dbReference type="ChEBI" id="CHEBI:15378"/>
        <dbReference type="ChEBI" id="CHEBI:24996"/>
        <dbReference type="ChEBI" id="CHEBI:29950"/>
        <dbReference type="ChEBI" id="CHEBI:131710"/>
        <dbReference type="EC" id="3.5.1.124"/>
    </reaction>
</comment>
<comment type="catalytic activity">
    <reaction evidence="1">
        <text>N(omega)-(1-hydroxy-2-oxoethyl)-L-arginyl-[protein] + H2O = L-arginyl-[protein] + glycolate + H(+)</text>
        <dbReference type="Rhea" id="RHEA:57188"/>
        <dbReference type="Rhea" id="RHEA-COMP:10532"/>
        <dbReference type="Rhea" id="RHEA-COMP:14844"/>
        <dbReference type="ChEBI" id="CHEBI:15377"/>
        <dbReference type="ChEBI" id="CHEBI:15378"/>
        <dbReference type="ChEBI" id="CHEBI:29805"/>
        <dbReference type="ChEBI" id="CHEBI:29965"/>
        <dbReference type="ChEBI" id="CHEBI:141553"/>
        <dbReference type="EC" id="3.5.1.124"/>
    </reaction>
</comment>
<comment type="catalytic activity">
    <reaction evidence="1">
        <text>N(6)-(1-hydroxy-2-oxoethyl)-L-lysyl-[protein] + H2O = glycolate + L-lysyl-[protein] + H(+)</text>
        <dbReference type="Rhea" id="RHEA:57192"/>
        <dbReference type="Rhea" id="RHEA-COMP:9752"/>
        <dbReference type="Rhea" id="RHEA-COMP:14845"/>
        <dbReference type="ChEBI" id="CHEBI:15377"/>
        <dbReference type="ChEBI" id="CHEBI:15378"/>
        <dbReference type="ChEBI" id="CHEBI:29805"/>
        <dbReference type="ChEBI" id="CHEBI:29969"/>
        <dbReference type="ChEBI" id="CHEBI:141554"/>
        <dbReference type="EC" id="3.5.1.124"/>
    </reaction>
</comment>
<comment type="catalytic activity">
    <reaction evidence="1">
        <text>S-(1-hydroxy-2-oxoethyl)-L-cysteinyl-[protein] + H2O = glycolate + L-cysteinyl-[protein] + H(+)</text>
        <dbReference type="Rhea" id="RHEA:57196"/>
        <dbReference type="Rhea" id="RHEA-COMP:10131"/>
        <dbReference type="Rhea" id="RHEA-COMP:14846"/>
        <dbReference type="ChEBI" id="CHEBI:15377"/>
        <dbReference type="ChEBI" id="CHEBI:15378"/>
        <dbReference type="ChEBI" id="CHEBI:29805"/>
        <dbReference type="ChEBI" id="CHEBI:29950"/>
        <dbReference type="ChEBI" id="CHEBI:141555"/>
        <dbReference type="EC" id="3.5.1.124"/>
    </reaction>
</comment>
<comment type="catalytic activity">
    <reaction evidence="1">
        <text>N(2)-(1-hydroxy-2-oxopropyl)-dGTP + H2O = lactate + dGTP + H(+)</text>
        <dbReference type="Rhea" id="RHEA:57244"/>
        <dbReference type="ChEBI" id="CHEBI:15377"/>
        <dbReference type="ChEBI" id="CHEBI:15378"/>
        <dbReference type="ChEBI" id="CHEBI:24996"/>
        <dbReference type="ChEBI" id="CHEBI:61429"/>
        <dbReference type="ChEBI" id="CHEBI:141569"/>
    </reaction>
</comment>
<comment type="catalytic activity">
    <reaction evidence="1">
        <text>N(2)-(1-hydroxy-2-oxopropyl)-GTP + H2O = lactate + GTP + H(+)</text>
        <dbReference type="Rhea" id="RHEA:57256"/>
        <dbReference type="ChEBI" id="CHEBI:15377"/>
        <dbReference type="ChEBI" id="CHEBI:15378"/>
        <dbReference type="ChEBI" id="CHEBI:24996"/>
        <dbReference type="ChEBI" id="CHEBI:37565"/>
        <dbReference type="ChEBI" id="CHEBI:141570"/>
    </reaction>
</comment>
<comment type="catalytic activity">
    <reaction evidence="1">
        <text>N(2)-(1-hydroxy-2-oxopropyl)-GDP + H2O = lactate + GDP + H(+)</text>
        <dbReference type="Rhea" id="RHEA:57260"/>
        <dbReference type="ChEBI" id="CHEBI:15377"/>
        <dbReference type="ChEBI" id="CHEBI:15378"/>
        <dbReference type="ChEBI" id="CHEBI:24996"/>
        <dbReference type="ChEBI" id="CHEBI:58189"/>
        <dbReference type="ChEBI" id="CHEBI:141573"/>
    </reaction>
</comment>
<comment type="catalytic activity">
    <reaction evidence="1">
        <text>N(2)-(1-hydroxy-2-oxopropyl)-GMP + H2O = lactate + GMP + H(+)</text>
        <dbReference type="Rhea" id="RHEA:57268"/>
        <dbReference type="ChEBI" id="CHEBI:15377"/>
        <dbReference type="ChEBI" id="CHEBI:15378"/>
        <dbReference type="ChEBI" id="CHEBI:24996"/>
        <dbReference type="ChEBI" id="CHEBI:58115"/>
        <dbReference type="ChEBI" id="CHEBI:141575"/>
    </reaction>
</comment>
<comment type="catalytic activity">
    <reaction evidence="1">
        <text>N(2)-(1-hydroxy-2-oxoethyl)-dGTP + H2O = dGTP + glycolate + H(+)</text>
        <dbReference type="Rhea" id="RHEA:57248"/>
        <dbReference type="ChEBI" id="CHEBI:15377"/>
        <dbReference type="ChEBI" id="CHEBI:15378"/>
        <dbReference type="ChEBI" id="CHEBI:29805"/>
        <dbReference type="ChEBI" id="CHEBI:61429"/>
        <dbReference type="ChEBI" id="CHEBI:141572"/>
    </reaction>
</comment>
<comment type="catalytic activity">
    <reaction evidence="1">
        <text>N(2)-(1-hydroxy-2-oxoethyl)-GTP + H2O = glycolate + GTP + H(+)</text>
        <dbReference type="Rhea" id="RHEA:57252"/>
        <dbReference type="ChEBI" id="CHEBI:15377"/>
        <dbReference type="ChEBI" id="CHEBI:15378"/>
        <dbReference type="ChEBI" id="CHEBI:29805"/>
        <dbReference type="ChEBI" id="CHEBI:37565"/>
        <dbReference type="ChEBI" id="CHEBI:141571"/>
    </reaction>
</comment>
<comment type="catalytic activity">
    <reaction evidence="1">
        <text>N(2)-(1-hydroxy-2-oxoethyl)-GDP + H2O = glycolate + GDP + H(+)</text>
        <dbReference type="Rhea" id="RHEA:57264"/>
        <dbReference type="ChEBI" id="CHEBI:15377"/>
        <dbReference type="ChEBI" id="CHEBI:15378"/>
        <dbReference type="ChEBI" id="CHEBI:29805"/>
        <dbReference type="ChEBI" id="CHEBI:58189"/>
        <dbReference type="ChEBI" id="CHEBI:141574"/>
    </reaction>
</comment>
<comment type="catalytic activity">
    <reaction evidence="1">
        <text>N(2)-(1-hydroxy-2-oxoethyl)-GMP + H2O = glycolate + GMP + H(+)</text>
        <dbReference type="Rhea" id="RHEA:57304"/>
        <dbReference type="ChEBI" id="CHEBI:15377"/>
        <dbReference type="ChEBI" id="CHEBI:15378"/>
        <dbReference type="ChEBI" id="CHEBI:29805"/>
        <dbReference type="ChEBI" id="CHEBI:58115"/>
        <dbReference type="ChEBI" id="CHEBI:141576"/>
    </reaction>
</comment>
<comment type="catalytic activity">
    <reaction evidence="1">
        <text>an N(2)-(1-hydroxy-2-oxopropyl)-guanosine in RNA + H2O = a guanosine in RNA + lactate + H(+)</text>
        <dbReference type="Rhea" id="RHEA:57288"/>
        <dbReference type="Rhea" id="RHEA-COMP:14855"/>
        <dbReference type="Rhea" id="RHEA-COMP:14858"/>
        <dbReference type="ChEBI" id="CHEBI:15377"/>
        <dbReference type="ChEBI" id="CHEBI:15378"/>
        <dbReference type="ChEBI" id="CHEBI:24996"/>
        <dbReference type="ChEBI" id="CHEBI:74269"/>
        <dbReference type="ChEBI" id="CHEBI:141580"/>
    </reaction>
</comment>
<comment type="catalytic activity">
    <reaction evidence="1">
        <text>an N(2)-(1-hydroxy-2-oxopropyl)-2'-deoxyguanosine in DNA + H2O = a 2'-deoxyguanosine in DNA + lactate + H(+)</text>
        <dbReference type="Rhea" id="RHEA:57300"/>
        <dbReference type="Rhea" id="RHEA-COMP:11367"/>
        <dbReference type="Rhea" id="RHEA-COMP:14856"/>
        <dbReference type="ChEBI" id="CHEBI:15377"/>
        <dbReference type="ChEBI" id="CHEBI:15378"/>
        <dbReference type="ChEBI" id="CHEBI:24996"/>
        <dbReference type="ChEBI" id="CHEBI:85445"/>
        <dbReference type="ChEBI" id="CHEBI:141578"/>
    </reaction>
</comment>
<comment type="catalytic activity">
    <reaction evidence="1">
        <text>an N(2)-(1-hydroxy-2-oxoethyl)-guanosine in RNA + H2O = a guanosine in RNA + glycolate + H(+)</text>
        <dbReference type="Rhea" id="RHEA:57292"/>
        <dbReference type="Rhea" id="RHEA-COMP:14855"/>
        <dbReference type="Rhea" id="RHEA-COMP:14859"/>
        <dbReference type="ChEBI" id="CHEBI:15377"/>
        <dbReference type="ChEBI" id="CHEBI:15378"/>
        <dbReference type="ChEBI" id="CHEBI:29805"/>
        <dbReference type="ChEBI" id="CHEBI:74269"/>
        <dbReference type="ChEBI" id="CHEBI:141581"/>
    </reaction>
</comment>
<comment type="catalytic activity">
    <reaction evidence="1">
        <text>an N(2)-(1-hydroxy-2-oxoethyl)-2'-deoxyguanosine in DNA + H2O = a 2'-deoxyguanosine in DNA + glycolate + H(+)</text>
        <dbReference type="Rhea" id="RHEA:57296"/>
        <dbReference type="Rhea" id="RHEA-COMP:11367"/>
        <dbReference type="Rhea" id="RHEA-COMP:14857"/>
        <dbReference type="ChEBI" id="CHEBI:15377"/>
        <dbReference type="ChEBI" id="CHEBI:15378"/>
        <dbReference type="ChEBI" id="CHEBI:29805"/>
        <dbReference type="ChEBI" id="CHEBI:85445"/>
        <dbReference type="ChEBI" id="CHEBI:141579"/>
    </reaction>
</comment>
<comment type="subcellular location">
    <subcellularLocation>
        <location evidence="1">Cytoplasm</location>
    </subcellularLocation>
</comment>
<comment type="similarity">
    <text evidence="1">Belongs to the peptidase C56 family. HchA subfamily.</text>
</comment>
<accession>B7UX51</accession>
<sequence>MSNERDTSRTPTPDHAEHNAFFPSPYSLSQYTSAKTDFDGADYPTPYKGGKKVLMIGTDERYILMQNGSMFSTGNHPVEMLLPMYHLDKAGFEFDVATLSGNPVKLEMWAMPGEDEAVKSIYAKYLPKLKAPQKLADLLEQAVADDSPYAAVFVPGGHGVLAGIPHSREVKRLLNAFLAKDRYIITLCHGPACLLAPAVEEKPEDYPFKDYEICVFPDALDTGANLEIGYMPGPLPWLVGENLQKLGVKILNKGITGQVHRDRKLLTGDSPLASNNLGKLAAKTLLEAFAR</sequence>
<evidence type="ECO:0000255" key="1">
    <source>
        <dbReference type="HAMAP-Rule" id="MF_01046"/>
    </source>
</evidence>
<evidence type="ECO:0000256" key="2">
    <source>
        <dbReference type="SAM" id="MobiDB-lite"/>
    </source>
</evidence>
<proteinExistence type="inferred from homology"/>